<protein>
    <recommendedName>
        <fullName>4-hydroxybenzoyl-CoA reductase subunit beta</fullName>
        <shortName>4-HBCR subunit beta</shortName>
        <ecNumber evidence="3">1.1.7.1</ecNumber>
    </recommendedName>
</protein>
<comment type="function">
    <text evidence="3">Component of a complex that catalyzes the reductive dehydroxylation of 4-hydroxybenzoyl-CoA to benzoyl-CoA. Reaction is not reversible. Is a key enzyme in the anaerobic degradation of phenolic compounds.</text>
</comment>
<comment type="catalytic activity">
    <reaction evidence="3">
        <text>oxidized 2[4Fe-4S]-[ferredoxin] + benzoyl-CoA + H2O = 4-hydroxybenzoyl-CoA + reduced 2[4Fe-4S]-[ferredoxin] + 2 H(+)</text>
        <dbReference type="Rhea" id="RHEA:29603"/>
        <dbReference type="Rhea" id="RHEA-COMP:10002"/>
        <dbReference type="Rhea" id="RHEA-COMP:10004"/>
        <dbReference type="ChEBI" id="CHEBI:15377"/>
        <dbReference type="ChEBI" id="CHEBI:15378"/>
        <dbReference type="ChEBI" id="CHEBI:33722"/>
        <dbReference type="ChEBI" id="CHEBI:33723"/>
        <dbReference type="ChEBI" id="CHEBI:57356"/>
        <dbReference type="ChEBI" id="CHEBI:57369"/>
        <dbReference type="EC" id="1.1.7.1"/>
    </reaction>
</comment>
<comment type="cofactor">
    <cofactor>
        <name>FAD</name>
        <dbReference type="ChEBI" id="CHEBI:57692"/>
    </cofactor>
    <text>Binds 1 FAD per subunit.</text>
</comment>
<comment type="cofactor">
    <cofactor>
        <name>[4Fe-4S] cluster</name>
        <dbReference type="ChEBI" id="CHEBI:49883"/>
    </cofactor>
    <text>Binds 1 [4Fe-4S] cluster per subunit.</text>
</comment>
<comment type="activity regulation">
    <text evidence="3">Inactivated by low concentrations of cyanide in vitro.</text>
</comment>
<comment type="subunit">
    <text evidence="2 3">Heterohexamer of two alpha, two beta and two gamma subunits.</text>
</comment>
<reference key="1">
    <citation type="journal article" date="1998" name="Eur. J. Biochem.">
        <title>4-hydroxybenzoyl-CoA reductase (dehydroxylating) from the denitrifying bacterium Thauera aromatica -- prosthetic groups, electron donor, and genes of a member of the molybdenum-flavin-iron-sulfur proteins.</title>
        <authorList>
            <person name="Breese K."/>
            <person name="Fuchs G."/>
        </authorList>
    </citation>
    <scope>NUCLEOTIDE SEQUENCE [GENOMIC DNA]</scope>
    <scope>PROTEIN SEQUENCE OF 1-30 AND 169-185</scope>
    <scope>FUNCTION</scope>
    <scope>CATALYTIC ACTIVITY</scope>
    <scope>ACTIVITY REGULATION</scope>
    <scope>SUBUNIT</scope>
    <source>
        <strain>DSM 6984 / CIP 107765 / K172</strain>
    </source>
</reference>
<reference key="2">
    <citation type="journal article" date="2001" name="J. Biol. Chem.">
        <title>Redox centers of 4-hydroxybenzoyl-CoA reductase, a member of the xanthine oxidase family of molybdenum-containing enzymes.</title>
        <authorList>
            <person name="Boll M."/>
            <person name="Fuchs G."/>
            <person name="Meier C."/>
            <person name="Trautwein A."/>
            <person name="El Kasmi A."/>
            <person name="Ragsdale S.W."/>
            <person name="Buchanan G."/>
            <person name="Lowe D.J."/>
        </authorList>
    </citation>
    <scope>COFACTOR</scope>
    <scope>EPR SPECTROSCOPY</scope>
    <scope>MOSSBAUER SPECTROSCOPY</scope>
    <source>
        <strain>DSM 6984 / CIP 107765 / K172</strain>
    </source>
</reference>
<reference key="3">
    <citation type="journal article" date="2004" name="Structure">
        <title>Structure of a xanthine oxidase-related 4-hydroxybenzoyl-CoA reductase with an additional [4Fe-4S] cluster and an inverted electron flow.</title>
        <authorList>
            <person name="Unciuleac M."/>
            <person name="Warkentin E."/>
            <person name="Page C.C."/>
            <person name="Boll M."/>
            <person name="Ermler U."/>
        </authorList>
    </citation>
    <scope>X-RAY CRYSTALLOGRAPHY (1.6 ANGSTROMS) IN COMPLEX WITH FAD; [4FE-4S] CLUSTER AND SUBUNIT ALPHA AND GAMMA</scope>
    <scope>COFACTOR</scope>
    <scope>SUBUNIT</scope>
</reference>
<gene>
    <name type="primary">hcrB</name>
</gene>
<accession>O33820</accession>
<proteinExistence type="evidence at protein level"/>
<keyword id="KW-0002">3D-structure</keyword>
<keyword id="KW-0004">4Fe-4S</keyword>
<keyword id="KW-0903">Direct protein sequencing</keyword>
<keyword id="KW-0274">FAD</keyword>
<keyword id="KW-0285">Flavoprotein</keyword>
<keyword id="KW-0408">Iron</keyword>
<keyword id="KW-0411">Iron-sulfur</keyword>
<keyword id="KW-0479">Metal-binding</keyword>
<keyword id="KW-0560">Oxidoreductase</keyword>
<evidence type="ECO:0000255" key="1">
    <source>
        <dbReference type="PROSITE-ProRule" id="PRU00718"/>
    </source>
</evidence>
<evidence type="ECO:0000269" key="2">
    <source>
    </source>
</evidence>
<evidence type="ECO:0000269" key="3">
    <source>
    </source>
</evidence>
<evidence type="ECO:0000305" key="4"/>
<evidence type="ECO:0007829" key="5">
    <source>
        <dbReference type="PDB" id="1RM6"/>
    </source>
</evidence>
<evidence type="ECO:0007829" key="6">
    <source>
        <dbReference type="PDB" id="1SB3"/>
    </source>
</evidence>
<name>HCRB_THAAR</name>
<dbReference type="EC" id="1.1.7.1" evidence="3"/>
<dbReference type="EMBL" id="AJ001830">
    <property type="protein sequence ID" value="CAA05039.1"/>
    <property type="molecule type" value="Genomic_DNA"/>
</dbReference>
<dbReference type="PDB" id="1RM6">
    <property type="method" value="X-ray"/>
    <property type="resolution" value="1.60 A"/>
    <property type="chains" value="B/E=1-324"/>
</dbReference>
<dbReference type="PDB" id="1SB3">
    <property type="method" value="X-ray"/>
    <property type="resolution" value="2.20 A"/>
    <property type="chains" value="B/E=1-324"/>
</dbReference>
<dbReference type="PDBsum" id="1RM6"/>
<dbReference type="PDBsum" id="1SB3"/>
<dbReference type="SMR" id="O33820"/>
<dbReference type="DIP" id="DIP-48467N"/>
<dbReference type="IntAct" id="O33820">
    <property type="interactions" value="1"/>
</dbReference>
<dbReference type="KEGG" id="ag:CAA05039"/>
<dbReference type="BioCyc" id="MetaCyc:BOHBENREDTHAUERA-MONOMER"/>
<dbReference type="EvolutionaryTrace" id="O33820"/>
<dbReference type="GO" id="GO:0051539">
    <property type="term" value="F:4 iron, 4 sulfur cluster binding"/>
    <property type="evidence" value="ECO:0007669"/>
    <property type="project" value="UniProtKB-KW"/>
</dbReference>
<dbReference type="GO" id="GO:0018525">
    <property type="term" value="F:4-hydroxybenzoyl-CoA reductase activity"/>
    <property type="evidence" value="ECO:0007669"/>
    <property type="project" value="UniProtKB-EC"/>
</dbReference>
<dbReference type="GO" id="GO:0071949">
    <property type="term" value="F:FAD binding"/>
    <property type="evidence" value="ECO:0007669"/>
    <property type="project" value="InterPro"/>
</dbReference>
<dbReference type="GO" id="GO:0046872">
    <property type="term" value="F:metal ion binding"/>
    <property type="evidence" value="ECO:0007669"/>
    <property type="project" value="UniProtKB-KW"/>
</dbReference>
<dbReference type="Gene3D" id="3.30.465.10">
    <property type="match status" value="2"/>
</dbReference>
<dbReference type="Gene3D" id="3.30.390.50">
    <property type="entry name" value="CO dehydrogenase flavoprotein, C-terminal domain"/>
    <property type="match status" value="1"/>
</dbReference>
<dbReference type="Gene3D" id="3.30.43.10">
    <property type="entry name" value="Uridine Diphospho-n-acetylenolpyruvylglucosamine Reductase, domain 2"/>
    <property type="match status" value="1"/>
</dbReference>
<dbReference type="InterPro" id="IPR017608">
    <property type="entry name" value="4hydrxbenzoyl-CoA_Rdtase_bsu"/>
</dbReference>
<dbReference type="InterPro" id="IPR005107">
    <property type="entry name" value="CO_DH_flav_C"/>
</dbReference>
<dbReference type="InterPro" id="IPR036683">
    <property type="entry name" value="CO_DH_flav_C_dom_sf"/>
</dbReference>
<dbReference type="InterPro" id="IPR051312">
    <property type="entry name" value="Diverse_Substr_Oxidored"/>
</dbReference>
<dbReference type="InterPro" id="IPR016166">
    <property type="entry name" value="FAD-bd_PCMH"/>
</dbReference>
<dbReference type="InterPro" id="IPR036318">
    <property type="entry name" value="FAD-bd_PCMH-like_sf"/>
</dbReference>
<dbReference type="InterPro" id="IPR016167">
    <property type="entry name" value="FAD-bd_PCMH_sub1"/>
</dbReference>
<dbReference type="InterPro" id="IPR016169">
    <property type="entry name" value="FAD-bd_PCMH_sub2"/>
</dbReference>
<dbReference type="InterPro" id="IPR002346">
    <property type="entry name" value="Mopterin_DH_FAD-bd"/>
</dbReference>
<dbReference type="NCBIfam" id="TIGR03195">
    <property type="entry name" value="4hydrxCoA_B"/>
    <property type="match status" value="1"/>
</dbReference>
<dbReference type="PANTHER" id="PTHR42659:SF9">
    <property type="entry name" value="XANTHINE DEHYDROGENASE FAD-BINDING SUBUNIT XDHB-RELATED"/>
    <property type="match status" value="1"/>
</dbReference>
<dbReference type="PANTHER" id="PTHR42659">
    <property type="entry name" value="XANTHINE DEHYDROGENASE SUBUNIT C-RELATED"/>
    <property type="match status" value="1"/>
</dbReference>
<dbReference type="Pfam" id="PF03450">
    <property type="entry name" value="CO_deh_flav_C"/>
    <property type="match status" value="1"/>
</dbReference>
<dbReference type="Pfam" id="PF00941">
    <property type="entry name" value="FAD_binding_5"/>
    <property type="match status" value="1"/>
</dbReference>
<dbReference type="SMART" id="SM01092">
    <property type="entry name" value="CO_deh_flav_C"/>
    <property type="match status" value="1"/>
</dbReference>
<dbReference type="SUPFAM" id="SSF55447">
    <property type="entry name" value="CO dehydrogenase flavoprotein C-terminal domain-like"/>
    <property type="match status" value="1"/>
</dbReference>
<dbReference type="SUPFAM" id="SSF56176">
    <property type="entry name" value="FAD-binding/transporter-associated domain-like"/>
    <property type="match status" value="1"/>
</dbReference>
<dbReference type="PROSITE" id="PS51387">
    <property type="entry name" value="FAD_PCMH"/>
    <property type="match status" value="1"/>
</dbReference>
<feature type="chain" id="PRO_0000083926" description="4-hydroxybenzoyl-CoA reductase subunit beta">
    <location>
        <begin position="1"/>
        <end position="324"/>
    </location>
</feature>
<feature type="domain" description="FAD-binding PCMH-type" evidence="1">
    <location>
        <begin position="2"/>
        <end position="217"/>
    </location>
</feature>
<feature type="binding site" evidence="2">
    <location>
        <begin position="29"/>
        <end position="36"/>
    </location>
    <ligand>
        <name>FAD</name>
        <dbReference type="ChEBI" id="CHEBI:57692"/>
    </ligand>
</feature>
<feature type="binding site" evidence="2">
    <location>
        <position position="111"/>
    </location>
    <ligand>
        <name>FAD</name>
        <dbReference type="ChEBI" id="CHEBI:57692"/>
    </ligand>
</feature>
<feature type="binding site" evidence="2">
    <location>
        <position position="115"/>
    </location>
    <ligand>
        <name>FAD</name>
        <dbReference type="ChEBI" id="CHEBI:57692"/>
    </ligand>
</feature>
<feature type="binding site" evidence="2">
    <location>
        <position position="118"/>
    </location>
    <ligand>
        <name>FAD</name>
        <dbReference type="ChEBI" id="CHEBI:57692"/>
    </ligand>
</feature>
<feature type="binding site">
    <location>
        <position position="122"/>
    </location>
    <ligand>
        <name>[4Fe-4S] cluster</name>
        <dbReference type="ChEBI" id="CHEBI:49883"/>
    </ligand>
</feature>
<feature type="binding site">
    <location>
        <position position="138"/>
    </location>
    <ligand>
        <name>[4Fe-4S] cluster</name>
        <dbReference type="ChEBI" id="CHEBI:49883"/>
    </ligand>
</feature>
<feature type="binding site">
    <location>
        <position position="146"/>
    </location>
    <ligand>
        <name>[4Fe-4S] cluster</name>
        <dbReference type="ChEBI" id="CHEBI:49883"/>
    </ligand>
</feature>
<feature type="binding site">
    <location>
        <position position="155"/>
    </location>
    <ligand>
        <name>[4Fe-4S] cluster</name>
        <dbReference type="ChEBI" id="CHEBI:49883"/>
    </ligand>
</feature>
<feature type="binding site" evidence="2">
    <location>
        <position position="162"/>
    </location>
    <ligand>
        <name>FAD</name>
        <dbReference type="ChEBI" id="CHEBI:57692"/>
    </ligand>
</feature>
<feature type="binding site" evidence="2">
    <location>
        <position position="224"/>
    </location>
    <ligand>
        <name>FAD</name>
        <dbReference type="ChEBI" id="CHEBI:57692"/>
    </ligand>
</feature>
<feature type="sequence conflict" description="In Ref. 1; AA sequence." evidence="4" ref="1">
    <original>LAAEATLPL</original>
    <variation>GTVPVAQLF</variation>
    <location>
        <begin position="22"/>
        <end position="30"/>
    </location>
</feature>
<feature type="strand" evidence="5">
    <location>
        <begin position="8"/>
        <end position="10"/>
    </location>
</feature>
<feature type="helix" evidence="5">
    <location>
        <begin position="15"/>
        <end position="21"/>
    </location>
</feature>
<feature type="strand" evidence="5">
    <location>
        <begin position="27"/>
        <end position="32"/>
    </location>
</feature>
<feature type="helix" evidence="5">
    <location>
        <begin position="36"/>
        <end position="41"/>
    </location>
</feature>
<feature type="strand" evidence="5">
    <location>
        <begin position="48"/>
        <end position="52"/>
    </location>
</feature>
<feature type="turn" evidence="5">
    <location>
        <begin position="57"/>
        <end position="60"/>
    </location>
</feature>
<feature type="strand" evidence="5">
    <location>
        <begin position="62"/>
        <end position="64"/>
    </location>
</feature>
<feature type="strand" evidence="5">
    <location>
        <begin position="70"/>
        <end position="73"/>
    </location>
</feature>
<feature type="helix" evidence="5">
    <location>
        <begin position="78"/>
        <end position="83"/>
    </location>
</feature>
<feature type="helix" evidence="5">
    <location>
        <begin position="85"/>
        <end position="90"/>
    </location>
</feature>
<feature type="helix" evidence="5">
    <location>
        <begin position="92"/>
        <end position="100"/>
    </location>
</feature>
<feature type="helix" evidence="5">
    <location>
        <begin position="104"/>
        <end position="109"/>
    </location>
</feature>
<feature type="helix" evidence="5">
    <location>
        <begin position="112"/>
        <end position="116"/>
    </location>
</feature>
<feature type="turn" evidence="5">
    <location>
        <begin position="123"/>
        <end position="125"/>
    </location>
</feature>
<feature type="helix" evidence="5">
    <location>
        <begin position="129"/>
        <end position="134"/>
    </location>
</feature>
<feature type="strand" evidence="6">
    <location>
        <begin position="141"/>
        <end position="144"/>
    </location>
</feature>
<feature type="strand" evidence="5">
    <location>
        <begin position="147"/>
        <end position="149"/>
    </location>
</feature>
<feature type="helix" evidence="5">
    <location>
        <begin position="163"/>
        <end position="169"/>
    </location>
</feature>
<feature type="strand" evidence="5">
    <location>
        <begin position="173"/>
        <end position="178"/>
    </location>
</feature>
<feature type="strand" evidence="5">
    <location>
        <begin position="181"/>
        <end position="186"/>
    </location>
</feature>
<feature type="helix" evidence="5">
    <location>
        <begin position="187"/>
        <end position="190"/>
    </location>
</feature>
<feature type="strand" evidence="5">
    <location>
        <begin position="206"/>
        <end position="212"/>
    </location>
</feature>
<feature type="strand" evidence="5">
    <location>
        <begin position="219"/>
        <end position="225"/>
    </location>
</feature>
<feature type="strand" evidence="5">
    <location>
        <begin position="227"/>
        <end position="231"/>
    </location>
</feature>
<feature type="strand" evidence="5">
    <location>
        <begin position="235"/>
        <end position="245"/>
    </location>
</feature>
<feature type="strand" evidence="5">
    <location>
        <begin position="248"/>
        <end position="262"/>
    </location>
</feature>
<feature type="helix" evidence="5">
    <location>
        <begin position="269"/>
        <end position="271"/>
    </location>
</feature>
<feature type="helix" evidence="5">
    <location>
        <begin position="278"/>
        <end position="291"/>
    </location>
</feature>
<feature type="strand" evidence="5">
    <location>
        <begin position="298"/>
        <end position="300"/>
    </location>
</feature>
<feature type="helix" evidence="5">
    <location>
        <begin position="302"/>
        <end position="322"/>
    </location>
</feature>
<sequence length="324" mass="34374">MNILTDFRTHRPATLADAVNALAAEATLPLGAGTDLLPNLRRGLGHPAALVDLTGIDGLATISTLADGSLRIGAGATLEAIAEHDAIRTTWPALAQAAESVAGPTHRAAATLGGNLCQDTRCTFYNQSEWWRSGNGYCLKYKGDKCHVIVKSDRCYATYHGDVAPALMVLDARAEIVGPAGKRTVPVAQLFRESGAEHLTLEKGELLAAIEVPPTGAWSAAYSKVRIRDAVDFPLAGVAAALQRDGDRIAGLRVAITGSNSAPLMVPVDALLGGNWDDAAAETLAQLVRKTSNVLRTTITGVKYRRRVLLAISRKVVDQLWEAR</sequence>
<organism>
    <name type="scientific">Thauera aromatica</name>
    <dbReference type="NCBI Taxonomy" id="59405"/>
    <lineage>
        <taxon>Bacteria</taxon>
        <taxon>Pseudomonadati</taxon>
        <taxon>Pseudomonadota</taxon>
        <taxon>Betaproteobacteria</taxon>
        <taxon>Rhodocyclales</taxon>
        <taxon>Zoogloeaceae</taxon>
        <taxon>Thauera</taxon>
    </lineage>
</organism>